<reference evidence="8 9" key="1">
    <citation type="journal article" date="2008" name="Nat. Biotechnol.">
        <title>Genome sequencing and analysis of the biomass-degrading fungus Trichoderma reesei (syn. Hypocrea jecorina).</title>
        <authorList>
            <person name="Martinez D."/>
            <person name="Berka R.M."/>
            <person name="Henrissat B."/>
            <person name="Saloheimo M."/>
            <person name="Arvas M."/>
            <person name="Baker S.E."/>
            <person name="Chapman J."/>
            <person name="Chertkov O."/>
            <person name="Coutinho P.M."/>
            <person name="Cullen D."/>
            <person name="Danchin E.G."/>
            <person name="Grigoriev I.V."/>
            <person name="Harris P."/>
            <person name="Jackson M."/>
            <person name="Kubicek C.P."/>
            <person name="Han C.S."/>
            <person name="Ho I."/>
            <person name="Larrondo L.F."/>
            <person name="de Leon A.L."/>
            <person name="Magnuson J.K."/>
            <person name="Merino S."/>
            <person name="Misra M."/>
            <person name="Nelson B."/>
            <person name="Putnam N."/>
            <person name="Robbertse B."/>
            <person name="Salamov A.A."/>
            <person name="Schmoll M."/>
            <person name="Terry A."/>
            <person name="Thayer N."/>
            <person name="Westerholm-Parvinen A."/>
            <person name="Schoch C.L."/>
            <person name="Yao J."/>
            <person name="Barabote R."/>
            <person name="Nelson M.A."/>
            <person name="Detter C."/>
            <person name="Bruce D."/>
            <person name="Kuske C.R."/>
            <person name="Xie G."/>
            <person name="Richardson P."/>
            <person name="Rokhsar D.S."/>
            <person name="Lucas S.M."/>
            <person name="Rubin E.M."/>
            <person name="Dunn-Coleman N."/>
            <person name="Ward M."/>
            <person name="Brettin T.S."/>
        </authorList>
    </citation>
    <scope>NUCLEOTIDE SEQUENCE [LARGE SCALE GENOMIC DNA]</scope>
    <source>
        <strain evidence="8 9">QM6a</strain>
    </source>
</reference>
<reference key="2">
    <citation type="journal article" date="2016" name="BMC Evol. Biol.">
        <title>Several steps of lateral gene transfer followed by events of 'birth-and-death' evolution shaped a fungal sorbicillinoid biosynthetic gene cluster.</title>
        <authorList>
            <person name="Druzhinina I.S."/>
            <person name="Kubicek E.M."/>
            <person name="Kubicek C.P."/>
        </authorList>
    </citation>
    <scope>IDENTIFICATION</scope>
</reference>
<reference key="3">
    <citation type="journal article" date="2017" name="Front. Microbiol.">
        <title>In vivo study of the sorbicillinoid gene cluster in Trichoderma reesei.</title>
        <authorList>
            <person name="Derntl C."/>
            <person name="Guzman-Chavez F."/>
            <person name="Mello-de-Sousa T.M."/>
            <person name="Busse H.J."/>
            <person name="Driessen A.J.M."/>
            <person name="Mach R.L."/>
            <person name="Mach-Aigner A.R."/>
        </authorList>
    </citation>
    <scope>FUNCTION</scope>
    <scope>DISRUPTION PHENOTYPE</scope>
</reference>
<name>SORR1_HYPJQ</name>
<sequence length="685" mass="75309">MGSSATATTTGESTRQQPGLACEECRRRKARCDRVRPKCGICADSGRNCVVLDKRSQRGPKKGQLKDLRSRLMLLEQRLVGQNDAPSLPQERDSLGCPTPSEKVSPEGDLVSSRASTDIGLDTCMGSTAGAFALFGSTSGSDKMPPLTPDLSTASTANSMAACICKGWQTEPAMFSTSPFPQIPLTPQSTTAPSRMPSISLAAADPIMPDVRVHPFAPMVHKRRYYAWASDPNASPARTALRSAMRTIASAMSPQFCDIGHVMYASTRRMLETQDACPETGLPWMTRLKPPHEQRKMHHERIQAWLLLAYYDVLRKSEHQAFITARRAFRLLRLSGLCEMDIDAYSGRQGDVATCTPPAETTWNMQMCSSENGADEAVLQQDWISVEERRRTVWSAFLLDRLSTMVNDQPTMLMEEAVTKPHACTFSWYFSADLPISNQFYTRLPMSEAEFQSGTQEPVSQMGFLIEATDGIKASNSIQPLPPFAHCVVVANLFARCMTHCKMAMQSPPMSAPEAHDFWIRHQWLASAAANACESTETRCDPMLVFTRILAYSASLSLCSTANATSWQTLDHHLMAMACKPAAHQAASEVVRIIKTAPRIAFFKMHPFFPNAIALVTSFLNADVPYLPSTRGGNAMDAIQERQDAVNELLAALRRSSQVNNLAAELLCKLELDIGQAASDGSIYG</sequence>
<protein>
    <recommendedName>
        <fullName evidence="4">Sorbicillinoid biosynthetic cluster transcription factor sor4</fullName>
    </recommendedName>
    <alternativeName>
        <fullName evidence="4">Sorbicillinoid biosynthetic cluster protein 4</fullName>
    </alternativeName>
</protein>
<comment type="function">
    <text evidence="7">Transcription factor that acts as the main regulator of the gene cluster that mediates the biosynthesis of sorbicillinoids, a diverse group of yellow secondary metabolites that restrict growth of competing pathogenic fungi but not of bacteria (PubMed:29104566).</text>
</comment>
<comment type="subcellular location">
    <subcellularLocation>
        <location evidence="6">Nucleus</location>
    </subcellularLocation>
</comment>
<comment type="disruption phenotype">
    <text evidence="3">Impairs the production of sorbicillinol (PubMed:29104566).</text>
</comment>
<proteinExistence type="predicted"/>
<accession>G0R6T4</accession>
<keyword id="KW-0238">DNA-binding</keyword>
<keyword id="KW-0479">Metal-binding</keyword>
<keyword id="KW-0539">Nucleus</keyword>
<keyword id="KW-1185">Reference proteome</keyword>
<keyword id="KW-0804">Transcription</keyword>
<keyword id="KW-0805">Transcription regulation</keyword>
<keyword id="KW-0862">Zinc</keyword>
<gene>
    <name evidence="4" type="primary">sor4</name>
    <name evidence="5" type="synonym">ypr1</name>
    <name type="ORF">TRIREDRAFT_102499</name>
</gene>
<feature type="chain" id="PRO_0000443839" description="Sorbicillinoid biosynthetic cluster transcription factor sor4">
    <location>
        <begin position="1"/>
        <end position="685"/>
    </location>
</feature>
<feature type="DNA-binding region" description="Zn(2)-C6 fungal-type" evidence="1">
    <location>
        <begin position="22"/>
        <end position="49"/>
    </location>
</feature>
<feature type="region of interest" description="Disordered" evidence="2">
    <location>
        <begin position="1"/>
        <end position="20"/>
    </location>
</feature>
<feature type="region of interest" description="Disordered" evidence="2">
    <location>
        <begin position="81"/>
        <end position="112"/>
    </location>
</feature>
<feature type="compositionally biased region" description="Low complexity" evidence="2">
    <location>
        <begin position="1"/>
        <end position="14"/>
    </location>
</feature>
<evidence type="ECO:0000255" key="1">
    <source>
        <dbReference type="PROSITE-ProRule" id="PRU00227"/>
    </source>
</evidence>
<evidence type="ECO:0000256" key="2">
    <source>
        <dbReference type="SAM" id="MobiDB-lite"/>
    </source>
</evidence>
<evidence type="ECO:0000269" key="3">
    <source>
    </source>
</evidence>
<evidence type="ECO:0000303" key="4">
    <source>
    </source>
</evidence>
<evidence type="ECO:0000303" key="5">
    <source>
    </source>
</evidence>
<evidence type="ECO:0000305" key="6"/>
<evidence type="ECO:0000305" key="7">
    <source>
    </source>
</evidence>
<evidence type="ECO:0000312" key="8">
    <source>
        <dbReference type="EMBL" id="EGR52693.1"/>
    </source>
</evidence>
<evidence type="ECO:0000312" key="9">
    <source>
        <dbReference type="Proteomes" id="UP000008984"/>
    </source>
</evidence>
<organism evidence="9">
    <name type="scientific">Hypocrea jecorina (strain QM6a)</name>
    <name type="common">Trichoderma reesei</name>
    <dbReference type="NCBI Taxonomy" id="431241"/>
    <lineage>
        <taxon>Eukaryota</taxon>
        <taxon>Fungi</taxon>
        <taxon>Dikarya</taxon>
        <taxon>Ascomycota</taxon>
        <taxon>Pezizomycotina</taxon>
        <taxon>Sordariomycetes</taxon>
        <taxon>Hypocreomycetidae</taxon>
        <taxon>Hypocreales</taxon>
        <taxon>Hypocreaceae</taxon>
        <taxon>Trichoderma</taxon>
    </lineage>
</organism>
<dbReference type="EMBL" id="GL985056">
    <property type="protein sequence ID" value="EGR52693.1"/>
    <property type="molecule type" value="Genomic_DNA"/>
</dbReference>
<dbReference type="RefSeq" id="XP_006961563.1">
    <property type="nucleotide sequence ID" value="XM_006961501.1"/>
</dbReference>
<dbReference type="STRING" id="431241.G0R6T4"/>
<dbReference type="EnsemblFungi" id="EGR52693">
    <property type="protein sequence ID" value="EGR52693"/>
    <property type="gene ID" value="TRIREDRAFT_102499"/>
</dbReference>
<dbReference type="GeneID" id="18480410"/>
<dbReference type="KEGG" id="tre:TRIREDRAFT_102499"/>
<dbReference type="VEuPathDB" id="FungiDB:TRIREDRAFT_102499"/>
<dbReference type="eggNOG" id="ENOG502QVC1">
    <property type="taxonomic scope" value="Eukaryota"/>
</dbReference>
<dbReference type="HOGENOM" id="CLU_011017_3_1_1"/>
<dbReference type="OrthoDB" id="3037908at2759"/>
<dbReference type="Proteomes" id="UP000008984">
    <property type="component" value="Unassembled WGS sequence"/>
</dbReference>
<dbReference type="GO" id="GO:0005634">
    <property type="term" value="C:nucleus"/>
    <property type="evidence" value="ECO:0007669"/>
    <property type="project" value="UniProtKB-SubCell"/>
</dbReference>
<dbReference type="GO" id="GO:0003677">
    <property type="term" value="F:DNA binding"/>
    <property type="evidence" value="ECO:0007669"/>
    <property type="project" value="UniProtKB-KW"/>
</dbReference>
<dbReference type="GO" id="GO:0000981">
    <property type="term" value="F:DNA-binding transcription factor activity, RNA polymerase II-specific"/>
    <property type="evidence" value="ECO:0007669"/>
    <property type="project" value="InterPro"/>
</dbReference>
<dbReference type="GO" id="GO:0008270">
    <property type="term" value="F:zinc ion binding"/>
    <property type="evidence" value="ECO:0007669"/>
    <property type="project" value="InterPro"/>
</dbReference>
<dbReference type="GO" id="GO:0006351">
    <property type="term" value="P:DNA-templated transcription"/>
    <property type="evidence" value="ECO:0007669"/>
    <property type="project" value="InterPro"/>
</dbReference>
<dbReference type="CDD" id="cd12148">
    <property type="entry name" value="fungal_TF_MHR"/>
    <property type="match status" value="1"/>
</dbReference>
<dbReference type="CDD" id="cd00067">
    <property type="entry name" value="GAL4"/>
    <property type="match status" value="1"/>
</dbReference>
<dbReference type="Gene3D" id="4.10.240.10">
    <property type="entry name" value="Zn(2)-C6 fungal-type DNA-binding domain"/>
    <property type="match status" value="1"/>
</dbReference>
<dbReference type="InterPro" id="IPR050815">
    <property type="entry name" value="TF_fung"/>
</dbReference>
<dbReference type="InterPro" id="IPR007219">
    <property type="entry name" value="Transcription_factor_dom_fun"/>
</dbReference>
<dbReference type="InterPro" id="IPR036864">
    <property type="entry name" value="Zn2-C6_fun-type_DNA-bd_sf"/>
</dbReference>
<dbReference type="InterPro" id="IPR001138">
    <property type="entry name" value="Zn2Cys6_DnaBD"/>
</dbReference>
<dbReference type="PANTHER" id="PTHR47338:SF3">
    <property type="entry name" value="C6 FINGER DOMAIN TRANSCRIPTION FACTOR DBAA-RELATED"/>
    <property type="match status" value="1"/>
</dbReference>
<dbReference type="PANTHER" id="PTHR47338">
    <property type="entry name" value="ZN(II)2CYS6 TRANSCRIPTION FACTOR (EUROFUNG)-RELATED"/>
    <property type="match status" value="1"/>
</dbReference>
<dbReference type="Pfam" id="PF04082">
    <property type="entry name" value="Fungal_trans"/>
    <property type="match status" value="1"/>
</dbReference>
<dbReference type="Pfam" id="PF00172">
    <property type="entry name" value="Zn_clus"/>
    <property type="match status" value="1"/>
</dbReference>
<dbReference type="SMART" id="SM00066">
    <property type="entry name" value="GAL4"/>
    <property type="match status" value="1"/>
</dbReference>
<dbReference type="SUPFAM" id="SSF57701">
    <property type="entry name" value="Zn2/Cys6 DNA-binding domain"/>
    <property type="match status" value="1"/>
</dbReference>
<dbReference type="PROSITE" id="PS00463">
    <property type="entry name" value="ZN2_CY6_FUNGAL_1"/>
    <property type="match status" value="1"/>
</dbReference>
<dbReference type="PROSITE" id="PS50048">
    <property type="entry name" value="ZN2_CY6_FUNGAL_2"/>
    <property type="match status" value="1"/>
</dbReference>